<evidence type="ECO:0000255" key="1">
    <source>
        <dbReference type="HAMAP-Rule" id="MF_00123"/>
    </source>
</evidence>
<feature type="chain" id="PRO_1000018055" description="Arginine--tRNA ligase">
    <location>
        <begin position="1"/>
        <end position="561"/>
    </location>
</feature>
<feature type="short sequence motif" description="'HIGH' region">
    <location>
        <begin position="128"/>
        <end position="138"/>
    </location>
</feature>
<reference key="1">
    <citation type="journal article" date="2011" name="Appl. Environ. Microbiol.">
        <title>Genomic potential of Marinobacter aquaeolei, a biogeochemical 'opportunitroph'.</title>
        <authorList>
            <person name="Singer E."/>
            <person name="Webb E.A."/>
            <person name="Nelson W.C."/>
            <person name="Heidelberg J.F."/>
            <person name="Ivanova N."/>
            <person name="Pati A."/>
            <person name="Edwards K.J."/>
        </authorList>
    </citation>
    <scope>NUCLEOTIDE SEQUENCE [LARGE SCALE GENOMIC DNA]</scope>
    <source>
        <strain>ATCC 700491 / DSM 11845 / VT8</strain>
    </source>
</reference>
<protein>
    <recommendedName>
        <fullName evidence="1">Arginine--tRNA ligase</fullName>
        <ecNumber evidence="1">6.1.1.19</ecNumber>
    </recommendedName>
    <alternativeName>
        <fullName evidence="1">Arginyl-tRNA synthetase</fullName>
        <shortName evidence="1">ArgRS</shortName>
    </alternativeName>
</protein>
<keyword id="KW-0030">Aminoacyl-tRNA synthetase</keyword>
<keyword id="KW-0067">ATP-binding</keyword>
<keyword id="KW-0963">Cytoplasm</keyword>
<keyword id="KW-0436">Ligase</keyword>
<keyword id="KW-0547">Nucleotide-binding</keyword>
<keyword id="KW-0648">Protein biosynthesis</keyword>
<gene>
    <name evidence="1" type="primary">argS</name>
    <name type="ordered locus">Maqu_0820</name>
</gene>
<name>SYR_MARN8</name>
<sequence length="561" mass="62130">MKETVSELLQSALATLQSDGTLPADQSFTPQVGNTKDKSHGDYACNIALVASKAAGCPPRKLAEALVAALPENSAVEKVEIAGPGFINFFMSTASAFGIVNTILDEAQQFGRNNSGNGERVQVEFVSANPTGPLHVGHGRGAAIGDCLCRLLEANGYDVTREFYYNDAGAQINNLALSVQSRVKGLTPEDESWPEDGYRGDYIVDVANAYLAGETVVADDREVTAKADPEDRDAIREFAVAYLRREQDLDLKAFGVQFDVYFLESSLYEDGKVEATVERLKANGYTYEQDGAMWLKTTEFGDDKDRVMRKKDGGYTYFLPDVAYHLDKWQRGFTTVINEQGADHHSTVTRVRAGLQALKADIPQGWPDYVLHQMVMVTRSGQEVKISKRAGSYVTVRDLIDEVGRDATRFFLAARRVDSQLTFDIDLARSQTNENPVYYIQYAHARICSVLRKLAAEGVQRGMNECVGELSLLTLDEEKELANQLAKYPELIANSAAQREPHHLTHYLRELAGQFHTYYNAHKVLIEDTALRDARVSLYLAVRQVIANGLDLLGVSAPEEM</sequence>
<dbReference type="EC" id="6.1.1.19" evidence="1"/>
<dbReference type="EMBL" id="CP000514">
    <property type="protein sequence ID" value="ABM17917.1"/>
    <property type="molecule type" value="Genomic_DNA"/>
</dbReference>
<dbReference type="RefSeq" id="WP_011784339.1">
    <property type="nucleotide sequence ID" value="NC_008740.1"/>
</dbReference>
<dbReference type="SMR" id="A1TYU8"/>
<dbReference type="STRING" id="351348.Maqu_0820"/>
<dbReference type="KEGG" id="maq:Maqu_0820"/>
<dbReference type="eggNOG" id="COG0018">
    <property type="taxonomic scope" value="Bacteria"/>
</dbReference>
<dbReference type="HOGENOM" id="CLU_006406_0_1_6"/>
<dbReference type="OrthoDB" id="9803211at2"/>
<dbReference type="Proteomes" id="UP000000998">
    <property type="component" value="Chromosome"/>
</dbReference>
<dbReference type="GO" id="GO:0005737">
    <property type="term" value="C:cytoplasm"/>
    <property type="evidence" value="ECO:0007669"/>
    <property type="project" value="UniProtKB-SubCell"/>
</dbReference>
<dbReference type="GO" id="GO:0004814">
    <property type="term" value="F:arginine-tRNA ligase activity"/>
    <property type="evidence" value="ECO:0007669"/>
    <property type="project" value="UniProtKB-UniRule"/>
</dbReference>
<dbReference type="GO" id="GO:0005524">
    <property type="term" value="F:ATP binding"/>
    <property type="evidence" value="ECO:0007669"/>
    <property type="project" value="UniProtKB-UniRule"/>
</dbReference>
<dbReference type="GO" id="GO:0006420">
    <property type="term" value="P:arginyl-tRNA aminoacylation"/>
    <property type="evidence" value="ECO:0007669"/>
    <property type="project" value="UniProtKB-UniRule"/>
</dbReference>
<dbReference type="CDD" id="cd07956">
    <property type="entry name" value="Anticodon_Ia_Arg"/>
    <property type="match status" value="1"/>
</dbReference>
<dbReference type="CDD" id="cd00671">
    <property type="entry name" value="ArgRS_core"/>
    <property type="match status" value="1"/>
</dbReference>
<dbReference type="FunFam" id="1.10.730.10:FF:000008">
    <property type="entry name" value="Arginine--tRNA ligase"/>
    <property type="match status" value="1"/>
</dbReference>
<dbReference type="FunFam" id="3.30.1360.70:FF:000003">
    <property type="entry name" value="Arginine--tRNA ligase"/>
    <property type="match status" value="1"/>
</dbReference>
<dbReference type="FunFam" id="3.40.50.620:FF:000062">
    <property type="entry name" value="Arginine--tRNA ligase"/>
    <property type="match status" value="1"/>
</dbReference>
<dbReference type="Gene3D" id="3.30.1360.70">
    <property type="entry name" value="Arginyl tRNA synthetase N-terminal domain"/>
    <property type="match status" value="1"/>
</dbReference>
<dbReference type="Gene3D" id="3.40.50.620">
    <property type="entry name" value="HUPs"/>
    <property type="match status" value="1"/>
</dbReference>
<dbReference type="Gene3D" id="1.10.730.10">
    <property type="entry name" value="Isoleucyl-tRNA Synthetase, Domain 1"/>
    <property type="match status" value="1"/>
</dbReference>
<dbReference type="HAMAP" id="MF_00123">
    <property type="entry name" value="Arg_tRNA_synth"/>
    <property type="match status" value="1"/>
</dbReference>
<dbReference type="InterPro" id="IPR001412">
    <property type="entry name" value="aa-tRNA-synth_I_CS"/>
</dbReference>
<dbReference type="InterPro" id="IPR001278">
    <property type="entry name" value="Arg-tRNA-ligase"/>
</dbReference>
<dbReference type="InterPro" id="IPR005148">
    <property type="entry name" value="Arg-tRNA-synth_N"/>
</dbReference>
<dbReference type="InterPro" id="IPR036695">
    <property type="entry name" value="Arg-tRNA-synth_N_sf"/>
</dbReference>
<dbReference type="InterPro" id="IPR035684">
    <property type="entry name" value="ArgRS_core"/>
</dbReference>
<dbReference type="InterPro" id="IPR008909">
    <property type="entry name" value="DALR_anticod-bd"/>
</dbReference>
<dbReference type="InterPro" id="IPR014729">
    <property type="entry name" value="Rossmann-like_a/b/a_fold"/>
</dbReference>
<dbReference type="InterPro" id="IPR009080">
    <property type="entry name" value="tRNAsynth_Ia_anticodon-bd"/>
</dbReference>
<dbReference type="NCBIfam" id="TIGR00456">
    <property type="entry name" value="argS"/>
    <property type="match status" value="1"/>
</dbReference>
<dbReference type="PANTHER" id="PTHR11956:SF5">
    <property type="entry name" value="ARGININE--TRNA LIGASE, CYTOPLASMIC"/>
    <property type="match status" value="1"/>
</dbReference>
<dbReference type="PANTHER" id="PTHR11956">
    <property type="entry name" value="ARGINYL-TRNA SYNTHETASE"/>
    <property type="match status" value="1"/>
</dbReference>
<dbReference type="Pfam" id="PF03485">
    <property type="entry name" value="Arg_tRNA_synt_N"/>
    <property type="match status" value="1"/>
</dbReference>
<dbReference type="Pfam" id="PF05746">
    <property type="entry name" value="DALR_1"/>
    <property type="match status" value="1"/>
</dbReference>
<dbReference type="Pfam" id="PF00750">
    <property type="entry name" value="tRNA-synt_1d"/>
    <property type="match status" value="1"/>
</dbReference>
<dbReference type="PRINTS" id="PR01038">
    <property type="entry name" value="TRNASYNTHARG"/>
</dbReference>
<dbReference type="SMART" id="SM01016">
    <property type="entry name" value="Arg_tRNA_synt_N"/>
    <property type="match status" value="1"/>
</dbReference>
<dbReference type="SMART" id="SM00836">
    <property type="entry name" value="DALR_1"/>
    <property type="match status" value="1"/>
</dbReference>
<dbReference type="SUPFAM" id="SSF47323">
    <property type="entry name" value="Anticodon-binding domain of a subclass of class I aminoacyl-tRNA synthetases"/>
    <property type="match status" value="1"/>
</dbReference>
<dbReference type="SUPFAM" id="SSF55190">
    <property type="entry name" value="Arginyl-tRNA synthetase (ArgRS), N-terminal 'additional' domain"/>
    <property type="match status" value="1"/>
</dbReference>
<dbReference type="SUPFAM" id="SSF52374">
    <property type="entry name" value="Nucleotidylyl transferase"/>
    <property type="match status" value="1"/>
</dbReference>
<dbReference type="PROSITE" id="PS00178">
    <property type="entry name" value="AA_TRNA_LIGASE_I"/>
    <property type="match status" value="1"/>
</dbReference>
<proteinExistence type="inferred from homology"/>
<accession>A1TYU8</accession>
<comment type="catalytic activity">
    <reaction evidence="1">
        <text>tRNA(Arg) + L-arginine + ATP = L-arginyl-tRNA(Arg) + AMP + diphosphate</text>
        <dbReference type="Rhea" id="RHEA:20301"/>
        <dbReference type="Rhea" id="RHEA-COMP:9658"/>
        <dbReference type="Rhea" id="RHEA-COMP:9673"/>
        <dbReference type="ChEBI" id="CHEBI:30616"/>
        <dbReference type="ChEBI" id="CHEBI:32682"/>
        <dbReference type="ChEBI" id="CHEBI:33019"/>
        <dbReference type="ChEBI" id="CHEBI:78442"/>
        <dbReference type="ChEBI" id="CHEBI:78513"/>
        <dbReference type="ChEBI" id="CHEBI:456215"/>
        <dbReference type="EC" id="6.1.1.19"/>
    </reaction>
</comment>
<comment type="subunit">
    <text evidence="1">Monomer.</text>
</comment>
<comment type="subcellular location">
    <subcellularLocation>
        <location evidence="1">Cytoplasm</location>
    </subcellularLocation>
</comment>
<comment type="similarity">
    <text evidence="1">Belongs to the class-I aminoacyl-tRNA synthetase family.</text>
</comment>
<organism>
    <name type="scientific">Marinobacter nauticus (strain ATCC 700491 / DSM 11845 / VT8)</name>
    <name type="common">Marinobacter aquaeolei</name>
    <dbReference type="NCBI Taxonomy" id="351348"/>
    <lineage>
        <taxon>Bacteria</taxon>
        <taxon>Pseudomonadati</taxon>
        <taxon>Pseudomonadota</taxon>
        <taxon>Gammaproteobacteria</taxon>
        <taxon>Pseudomonadales</taxon>
        <taxon>Marinobacteraceae</taxon>
        <taxon>Marinobacter</taxon>
    </lineage>
</organism>